<organism>
    <name type="scientific">Staphylococcus aureus (strain NCTC 8325 / PS 47)</name>
    <dbReference type="NCBI Taxonomy" id="93061"/>
    <lineage>
        <taxon>Bacteria</taxon>
        <taxon>Bacillati</taxon>
        <taxon>Bacillota</taxon>
        <taxon>Bacilli</taxon>
        <taxon>Bacillales</taxon>
        <taxon>Staphylococcaceae</taxon>
        <taxon>Staphylococcus</taxon>
    </lineage>
</organism>
<keyword id="KW-0028">Amino-acid biosynthesis</keyword>
<keyword id="KW-0963">Cytoplasm</keyword>
<keyword id="KW-0368">Histidine biosynthesis</keyword>
<keyword id="KW-1185">Reference proteome</keyword>
<comment type="function">
    <text evidence="1">Required for the first step of histidine biosynthesis. May allow the feedback regulation of ATP phosphoribosyltransferase activity by histidine.</text>
</comment>
<comment type="pathway">
    <text evidence="1">Amino-acid biosynthesis; L-histidine biosynthesis; L-histidine from 5-phospho-alpha-D-ribose 1-diphosphate: step 1/9.</text>
</comment>
<comment type="subunit">
    <text evidence="1">Heteromultimer composed of HisG and HisZ subunits.</text>
</comment>
<comment type="subcellular location">
    <subcellularLocation>
        <location evidence="1">Cytoplasm</location>
    </subcellularLocation>
</comment>
<comment type="miscellaneous">
    <text>This function is generally fulfilled by the C-terminal part of HisG, which is missing in some bacteria such as this one.</text>
</comment>
<comment type="similarity">
    <text evidence="1">Belongs to the class-II aminoacyl-tRNA synthetase family. HisZ subfamily.</text>
</comment>
<name>HISZ_STAA8</name>
<sequence>MNNSEQLIALKESETAFLKYFNKADYELVDFSVVEKLDWKQLNHEDLQQMGERNFWQHEHQIYALRNDFTDQLLRYYSMYPTAATKVAYTGLIIRNNEAAVQVGLENYAPSLANVQQSLKLFIQFIQQQLRDNVHFVVLGHYQLLDALLDKSLQTPDILSMIEERNLSGLVTYLSTEHPIVQILKENTQQQLNVLEHYIPNDHPALVELKIWERWLHKQGYKDIHLDITAQPPRSYYTGLFIQCHFAENESRVLTGGYYKGSIEGFGLGLTL</sequence>
<dbReference type="EMBL" id="CP000253">
    <property type="protein sequence ID" value="ABD32001.1"/>
    <property type="molecule type" value="Genomic_DNA"/>
</dbReference>
<dbReference type="RefSeq" id="WP_001065590.1">
    <property type="nucleotide sequence ID" value="NZ_LS483365.1"/>
</dbReference>
<dbReference type="RefSeq" id="YP_501464.1">
    <property type="nucleotide sequence ID" value="NC_007795.1"/>
</dbReference>
<dbReference type="SMR" id="Q2FUT6"/>
<dbReference type="STRING" id="93061.SAOUHSC_03015"/>
<dbReference type="PaxDb" id="1280-SAXN108_2954"/>
<dbReference type="GeneID" id="3921496"/>
<dbReference type="KEGG" id="sao:SAOUHSC_03015"/>
<dbReference type="PATRIC" id="fig|93061.5.peg.2723"/>
<dbReference type="eggNOG" id="COG3705">
    <property type="taxonomic scope" value="Bacteria"/>
</dbReference>
<dbReference type="HOGENOM" id="CLU_089652_0_0_9"/>
<dbReference type="OrthoDB" id="2387597at2"/>
<dbReference type="UniPathway" id="UPA00031">
    <property type="reaction ID" value="UER00006"/>
</dbReference>
<dbReference type="PRO" id="PR:Q2FUT6"/>
<dbReference type="Proteomes" id="UP000008816">
    <property type="component" value="Chromosome"/>
</dbReference>
<dbReference type="GO" id="GO:0005737">
    <property type="term" value="C:cytoplasm"/>
    <property type="evidence" value="ECO:0007669"/>
    <property type="project" value="UniProtKB-SubCell"/>
</dbReference>
<dbReference type="GO" id="GO:0140096">
    <property type="term" value="F:catalytic activity, acting on a protein"/>
    <property type="evidence" value="ECO:0007669"/>
    <property type="project" value="UniProtKB-ARBA"/>
</dbReference>
<dbReference type="GO" id="GO:0016740">
    <property type="term" value="F:transferase activity"/>
    <property type="evidence" value="ECO:0007669"/>
    <property type="project" value="UniProtKB-ARBA"/>
</dbReference>
<dbReference type="GO" id="GO:0000105">
    <property type="term" value="P:L-histidine biosynthetic process"/>
    <property type="evidence" value="ECO:0007669"/>
    <property type="project" value="UniProtKB-UniRule"/>
</dbReference>
<dbReference type="Gene3D" id="3.30.930.10">
    <property type="entry name" value="Bira Bifunctional Protein, Domain 2"/>
    <property type="match status" value="1"/>
</dbReference>
<dbReference type="HAMAP" id="MF_00125">
    <property type="entry name" value="HisZ"/>
    <property type="match status" value="1"/>
</dbReference>
<dbReference type="InterPro" id="IPR045864">
    <property type="entry name" value="aa-tRNA-synth_II/BPL/LPL"/>
</dbReference>
<dbReference type="InterPro" id="IPR041715">
    <property type="entry name" value="HisRS-like_core"/>
</dbReference>
<dbReference type="InterPro" id="IPR004517">
    <property type="entry name" value="HisZ"/>
</dbReference>
<dbReference type="NCBIfam" id="NF008947">
    <property type="entry name" value="PRK12294.1"/>
    <property type="match status" value="1"/>
</dbReference>
<dbReference type="Pfam" id="PF13393">
    <property type="entry name" value="tRNA-synt_His"/>
    <property type="match status" value="1"/>
</dbReference>
<dbReference type="SUPFAM" id="SSF55681">
    <property type="entry name" value="Class II aaRS and biotin synthetases"/>
    <property type="match status" value="1"/>
</dbReference>
<reference key="1">
    <citation type="book" date="2006" name="Gram positive pathogens, 2nd edition">
        <title>The Staphylococcus aureus NCTC 8325 genome.</title>
        <editorList>
            <person name="Fischetti V."/>
            <person name="Novick R."/>
            <person name="Ferretti J."/>
            <person name="Portnoy D."/>
            <person name="Rood J."/>
        </editorList>
        <authorList>
            <person name="Gillaspy A.F."/>
            <person name="Worrell V."/>
            <person name="Orvis J."/>
            <person name="Roe B.A."/>
            <person name="Dyer D.W."/>
            <person name="Iandolo J.J."/>
        </authorList>
    </citation>
    <scope>NUCLEOTIDE SEQUENCE [LARGE SCALE GENOMIC DNA]</scope>
    <source>
        <strain>NCTC 8325 / PS 47</strain>
    </source>
</reference>
<protein>
    <recommendedName>
        <fullName evidence="1">ATP phosphoribosyltransferase regulatory subunit</fullName>
    </recommendedName>
</protein>
<feature type="chain" id="PRO_1000016286" description="ATP phosphoribosyltransferase regulatory subunit">
    <location>
        <begin position="1"/>
        <end position="272"/>
    </location>
</feature>
<gene>
    <name evidence="1" type="primary">hisZ</name>
    <name type="ordered locus">SAOUHSC_03015</name>
</gene>
<accession>Q2FUT6</accession>
<proteinExistence type="inferred from homology"/>
<evidence type="ECO:0000255" key="1">
    <source>
        <dbReference type="HAMAP-Rule" id="MF_00125"/>
    </source>
</evidence>